<protein>
    <recommendedName>
        <fullName evidence="1">3-dehydroquinate synthase</fullName>
        <shortName evidence="1">DHQS</shortName>
        <ecNumber evidence="1">4.2.3.4</ecNumber>
    </recommendedName>
</protein>
<dbReference type="EC" id="4.2.3.4" evidence="1"/>
<dbReference type="EMBL" id="CP001139">
    <property type="protein sequence ID" value="ACH65398.1"/>
    <property type="molecule type" value="Genomic_DNA"/>
</dbReference>
<dbReference type="RefSeq" id="WP_011262699.1">
    <property type="nucleotide sequence ID" value="NC_011184.1"/>
</dbReference>
<dbReference type="SMR" id="B5FBN1"/>
<dbReference type="GeneID" id="54165006"/>
<dbReference type="KEGG" id="vfm:VFMJ11_2403"/>
<dbReference type="HOGENOM" id="CLU_001201_0_2_6"/>
<dbReference type="UniPathway" id="UPA00053">
    <property type="reaction ID" value="UER00085"/>
</dbReference>
<dbReference type="Proteomes" id="UP000001857">
    <property type="component" value="Chromosome I"/>
</dbReference>
<dbReference type="GO" id="GO:0005737">
    <property type="term" value="C:cytoplasm"/>
    <property type="evidence" value="ECO:0007669"/>
    <property type="project" value="UniProtKB-SubCell"/>
</dbReference>
<dbReference type="GO" id="GO:0003856">
    <property type="term" value="F:3-dehydroquinate synthase activity"/>
    <property type="evidence" value="ECO:0007669"/>
    <property type="project" value="UniProtKB-UniRule"/>
</dbReference>
<dbReference type="GO" id="GO:0046872">
    <property type="term" value="F:metal ion binding"/>
    <property type="evidence" value="ECO:0007669"/>
    <property type="project" value="UniProtKB-KW"/>
</dbReference>
<dbReference type="GO" id="GO:0000166">
    <property type="term" value="F:nucleotide binding"/>
    <property type="evidence" value="ECO:0007669"/>
    <property type="project" value="UniProtKB-KW"/>
</dbReference>
<dbReference type="GO" id="GO:0008652">
    <property type="term" value="P:amino acid biosynthetic process"/>
    <property type="evidence" value="ECO:0007669"/>
    <property type="project" value="UniProtKB-KW"/>
</dbReference>
<dbReference type="GO" id="GO:0009073">
    <property type="term" value="P:aromatic amino acid family biosynthetic process"/>
    <property type="evidence" value="ECO:0007669"/>
    <property type="project" value="UniProtKB-KW"/>
</dbReference>
<dbReference type="GO" id="GO:0009423">
    <property type="term" value="P:chorismate biosynthetic process"/>
    <property type="evidence" value="ECO:0007669"/>
    <property type="project" value="UniProtKB-UniRule"/>
</dbReference>
<dbReference type="CDD" id="cd08195">
    <property type="entry name" value="DHQS"/>
    <property type="match status" value="1"/>
</dbReference>
<dbReference type="FunFam" id="1.20.1090.10:FF:000002">
    <property type="entry name" value="3-dehydroquinate synthase"/>
    <property type="match status" value="1"/>
</dbReference>
<dbReference type="FunFam" id="3.40.50.1970:FF:000001">
    <property type="entry name" value="3-dehydroquinate synthase"/>
    <property type="match status" value="1"/>
</dbReference>
<dbReference type="Gene3D" id="3.40.50.1970">
    <property type="match status" value="1"/>
</dbReference>
<dbReference type="Gene3D" id="1.20.1090.10">
    <property type="entry name" value="Dehydroquinate synthase-like - alpha domain"/>
    <property type="match status" value="1"/>
</dbReference>
<dbReference type="HAMAP" id="MF_00110">
    <property type="entry name" value="DHQ_synthase"/>
    <property type="match status" value="1"/>
</dbReference>
<dbReference type="InterPro" id="IPR050071">
    <property type="entry name" value="Dehydroquinate_synthase"/>
</dbReference>
<dbReference type="InterPro" id="IPR016037">
    <property type="entry name" value="DHQ_synth_AroB"/>
</dbReference>
<dbReference type="InterPro" id="IPR030963">
    <property type="entry name" value="DHQ_synth_fam"/>
</dbReference>
<dbReference type="InterPro" id="IPR030960">
    <property type="entry name" value="DHQS/DOIS_N"/>
</dbReference>
<dbReference type="InterPro" id="IPR056179">
    <property type="entry name" value="DHQS_C"/>
</dbReference>
<dbReference type="NCBIfam" id="TIGR01357">
    <property type="entry name" value="aroB"/>
    <property type="match status" value="1"/>
</dbReference>
<dbReference type="PANTHER" id="PTHR43622">
    <property type="entry name" value="3-DEHYDROQUINATE SYNTHASE"/>
    <property type="match status" value="1"/>
</dbReference>
<dbReference type="PANTHER" id="PTHR43622:SF7">
    <property type="entry name" value="3-DEHYDROQUINATE SYNTHASE, CHLOROPLASTIC"/>
    <property type="match status" value="1"/>
</dbReference>
<dbReference type="Pfam" id="PF01761">
    <property type="entry name" value="DHQ_synthase"/>
    <property type="match status" value="1"/>
</dbReference>
<dbReference type="Pfam" id="PF24621">
    <property type="entry name" value="DHQS_C"/>
    <property type="match status" value="1"/>
</dbReference>
<dbReference type="PIRSF" id="PIRSF001455">
    <property type="entry name" value="DHQ_synth"/>
    <property type="match status" value="1"/>
</dbReference>
<dbReference type="SUPFAM" id="SSF56796">
    <property type="entry name" value="Dehydroquinate synthase-like"/>
    <property type="match status" value="1"/>
</dbReference>
<comment type="function">
    <text evidence="1">Catalyzes the conversion of 3-deoxy-D-arabino-heptulosonate 7-phosphate (DAHP) to dehydroquinate (DHQ).</text>
</comment>
<comment type="catalytic activity">
    <reaction evidence="1">
        <text>7-phospho-2-dehydro-3-deoxy-D-arabino-heptonate = 3-dehydroquinate + phosphate</text>
        <dbReference type="Rhea" id="RHEA:21968"/>
        <dbReference type="ChEBI" id="CHEBI:32364"/>
        <dbReference type="ChEBI" id="CHEBI:43474"/>
        <dbReference type="ChEBI" id="CHEBI:58394"/>
        <dbReference type="EC" id="4.2.3.4"/>
    </reaction>
</comment>
<comment type="cofactor">
    <cofactor evidence="1">
        <name>Co(2+)</name>
        <dbReference type="ChEBI" id="CHEBI:48828"/>
    </cofactor>
    <cofactor evidence="1">
        <name>Zn(2+)</name>
        <dbReference type="ChEBI" id="CHEBI:29105"/>
    </cofactor>
    <text evidence="1">Binds 1 divalent metal cation per subunit. Can use either Co(2+) or Zn(2+).</text>
</comment>
<comment type="cofactor">
    <cofactor evidence="1">
        <name>NAD(+)</name>
        <dbReference type="ChEBI" id="CHEBI:57540"/>
    </cofactor>
</comment>
<comment type="pathway">
    <text evidence="1">Metabolic intermediate biosynthesis; chorismate biosynthesis; chorismate from D-erythrose 4-phosphate and phosphoenolpyruvate: step 2/7.</text>
</comment>
<comment type="subcellular location">
    <subcellularLocation>
        <location evidence="1">Cytoplasm</location>
    </subcellularLocation>
</comment>
<comment type="similarity">
    <text evidence="1">Belongs to the sugar phosphate cyclases superfamily. Dehydroquinate synthase family.</text>
</comment>
<organism>
    <name type="scientific">Aliivibrio fischeri (strain MJ11)</name>
    <name type="common">Vibrio fischeri</name>
    <dbReference type="NCBI Taxonomy" id="388396"/>
    <lineage>
        <taxon>Bacteria</taxon>
        <taxon>Pseudomonadati</taxon>
        <taxon>Pseudomonadota</taxon>
        <taxon>Gammaproteobacteria</taxon>
        <taxon>Vibrionales</taxon>
        <taxon>Vibrionaceae</taxon>
        <taxon>Aliivibrio</taxon>
    </lineage>
</organism>
<keyword id="KW-0028">Amino-acid biosynthesis</keyword>
<keyword id="KW-0057">Aromatic amino acid biosynthesis</keyword>
<keyword id="KW-0170">Cobalt</keyword>
<keyword id="KW-0963">Cytoplasm</keyword>
<keyword id="KW-0456">Lyase</keyword>
<keyword id="KW-0479">Metal-binding</keyword>
<keyword id="KW-0520">NAD</keyword>
<keyword id="KW-0547">Nucleotide-binding</keyword>
<keyword id="KW-0862">Zinc</keyword>
<evidence type="ECO:0000255" key="1">
    <source>
        <dbReference type="HAMAP-Rule" id="MF_00110"/>
    </source>
</evidence>
<gene>
    <name evidence="1" type="primary">aroB</name>
    <name type="ordered locus">VFMJ11_2403</name>
</gene>
<accession>B5FBN1</accession>
<proteinExistence type="inferred from homology"/>
<reference key="1">
    <citation type="submission" date="2008-08" db="EMBL/GenBank/DDBJ databases">
        <title>Complete sequence of Vibrio fischeri strain MJ11.</title>
        <authorList>
            <person name="Mandel M.J."/>
            <person name="Stabb E.V."/>
            <person name="Ruby E.G."/>
            <person name="Ferriera S."/>
            <person name="Johnson J."/>
            <person name="Kravitz S."/>
            <person name="Beeson K."/>
            <person name="Sutton G."/>
            <person name="Rogers Y.-H."/>
            <person name="Friedman R."/>
            <person name="Frazier M."/>
            <person name="Venter J.C."/>
        </authorList>
    </citation>
    <scope>NUCLEOTIDE SEQUENCE [LARGE SCALE GENOMIC DNA]</scope>
    <source>
        <strain>MJ11</strain>
    </source>
</reference>
<sequence>METIHVDLAERSYPISIGAELFCNPAHFSSVIPAKKRVVVISNVTVAPLYAQQIIDTLNTFECQVSLLELDDGEQYKNLDTFNQILTFLLEENHSRDVTIVALGGGVVGDVVGFASACYQRGVDFIQIPTTLLSQVDSSVGGKTAINHPLGKNMVGAFYQPKAVIIDINCLKTLPEREFAAGMAEVIKYGIIVDREFFDWLDENMDKLYALDHDALIYAISRCCQIKADVVAKDEKESGMRALLNLGHTFGHAIEAEMGYGNWLHGEAVSAGTVMAAVTAQKEGLISQSDVERICSILEKAKLPLKAPKEMTVDAFMKHMMRDKKVLSGKLRLVLPTSIGSSEVVTGVSESVLAEVIEQCKA</sequence>
<feature type="chain" id="PRO_1000094652" description="3-dehydroquinate synthase">
    <location>
        <begin position="1"/>
        <end position="362"/>
    </location>
</feature>
<feature type="binding site" evidence="1">
    <location>
        <begin position="72"/>
        <end position="77"/>
    </location>
    <ligand>
        <name>NAD(+)</name>
        <dbReference type="ChEBI" id="CHEBI:57540"/>
    </ligand>
</feature>
<feature type="binding site" evidence="1">
    <location>
        <begin position="106"/>
        <end position="110"/>
    </location>
    <ligand>
        <name>NAD(+)</name>
        <dbReference type="ChEBI" id="CHEBI:57540"/>
    </ligand>
</feature>
<feature type="binding site" evidence="1">
    <location>
        <begin position="130"/>
        <end position="131"/>
    </location>
    <ligand>
        <name>NAD(+)</name>
        <dbReference type="ChEBI" id="CHEBI:57540"/>
    </ligand>
</feature>
<feature type="binding site" evidence="1">
    <location>
        <position position="143"/>
    </location>
    <ligand>
        <name>NAD(+)</name>
        <dbReference type="ChEBI" id="CHEBI:57540"/>
    </ligand>
</feature>
<feature type="binding site" evidence="1">
    <location>
        <position position="152"/>
    </location>
    <ligand>
        <name>NAD(+)</name>
        <dbReference type="ChEBI" id="CHEBI:57540"/>
    </ligand>
</feature>
<feature type="binding site" evidence="1">
    <location>
        <begin position="170"/>
        <end position="173"/>
    </location>
    <ligand>
        <name>NAD(+)</name>
        <dbReference type="ChEBI" id="CHEBI:57540"/>
    </ligand>
</feature>
<feature type="binding site" evidence="1">
    <location>
        <position position="185"/>
    </location>
    <ligand>
        <name>Zn(2+)</name>
        <dbReference type="ChEBI" id="CHEBI:29105"/>
    </ligand>
</feature>
<feature type="binding site" evidence="1">
    <location>
        <position position="248"/>
    </location>
    <ligand>
        <name>Zn(2+)</name>
        <dbReference type="ChEBI" id="CHEBI:29105"/>
    </ligand>
</feature>
<feature type="binding site" evidence="1">
    <location>
        <position position="265"/>
    </location>
    <ligand>
        <name>Zn(2+)</name>
        <dbReference type="ChEBI" id="CHEBI:29105"/>
    </ligand>
</feature>
<name>AROB_ALIFM</name>